<sequence>MLKHPATKYRPFPPIALPDRTWPSKTLTRAPIWMSTDLRDGNQALFEPMNAERKMRMFKMLVQIGFKEIEAAFPAASQTDYDFVRELIEGGHIPDDVTIEVLTQAREDLIRRTMESLRGARRAIIHVYNATSPVFRRTVFNTDREGVKRIAVESAKLIREIAESMPETQWTYQYSPEVFSGTELDFALEVCNAVTEAWDPTPAHKIIFNLPATVEMATPNVYADQIEWMHRHLARRDSILLSVHPHNDRGTAVAAAELAVMAGADRVEGCLFGNGERTGNVDLVTLALNLYSQGIDPGLDFSHVNDVARTCEDCTQLPVHPRHPYVGDLVFTAFSGSHQDAIKKGFAVQKPDAIWEMPYLPIDPADVGRTYDSIIRVNSQSGKGGVAYLLESGYGIAMPRRLQVEFSSTVQQLTDASGREATAADIWALFQETYLRADGPIGYVSHRLAERDDGSQHIRLVVNIADREHVCEGVGNGPLDALVQALAAVLAAPVSIHHYEERALGQGANADAIAFAELAAPGVAGSVFGVGIDANLTTASIRAVVGGVNRLAARHAQAQPGQSLLRRGMAPSMELA</sequence>
<feature type="chain" id="PRO_0000140440" description="2-isopropylmalate synthase">
    <location>
        <begin position="1"/>
        <end position="576"/>
    </location>
</feature>
<feature type="domain" description="Pyruvate carboxyltransferase" evidence="1">
    <location>
        <begin position="31"/>
        <end position="305"/>
    </location>
</feature>
<feature type="region of interest" description="Regulatory domain" evidence="1">
    <location>
        <begin position="437"/>
        <end position="576"/>
    </location>
</feature>
<feature type="binding site" evidence="1">
    <location>
        <position position="40"/>
    </location>
    <ligand>
        <name>Mg(2+)</name>
        <dbReference type="ChEBI" id="CHEBI:18420"/>
    </ligand>
</feature>
<feature type="binding site" evidence="1">
    <location>
        <position position="244"/>
    </location>
    <ligand>
        <name>Mg(2+)</name>
        <dbReference type="ChEBI" id="CHEBI:18420"/>
    </ligand>
</feature>
<feature type="binding site" evidence="1">
    <location>
        <position position="246"/>
    </location>
    <ligand>
        <name>Mg(2+)</name>
        <dbReference type="ChEBI" id="CHEBI:18420"/>
    </ligand>
</feature>
<feature type="binding site" evidence="1">
    <location>
        <position position="280"/>
    </location>
    <ligand>
        <name>Mg(2+)</name>
        <dbReference type="ChEBI" id="CHEBI:18420"/>
    </ligand>
</feature>
<dbReference type="EC" id="2.3.3.13" evidence="1"/>
<dbReference type="EMBL" id="AL646053">
    <property type="protein sequence ID" value="CAD17473.1"/>
    <property type="molecule type" value="Genomic_DNA"/>
</dbReference>
<dbReference type="RefSeq" id="WP_011003634.1">
    <property type="nucleotide sequence ID" value="NC_003296.1"/>
</dbReference>
<dbReference type="SMR" id="Q8XSZ5"/>
<dbReference type="STRING" id="267608.RSp0322"/>
<dbReference type="EnsemblBacteria" id="CAD17473">
    <property type="protein sequence ID" value="CAD17473"/>
    <property type="gene ID" value="RSp0322"/>
</dbReference>
<dbReference type="KEGG" id="rso:RSp0322"/>
<dbReference type="PATRIC" id="fig|267608.8.peg.3797"/>
<dbReference type="eggNOG" id="COG0119">
    <property type="taxonomic scope" value="Bacteria"/>
</dbReference>
<dbReference type="HOGENOM" id="CLU_004588_3_0_4"/>
<dbReference type="UniPathway" id="UPA00048">
    <property type="reaction ID" value="UER00070"/>
</dbReference>
<dbReference type="Proteomes" id="UP000001436">
    <property type="component" value="Plasmid megaplasmid Rsp"/>
</dbReference>
<dbReference type="GO" id="GO:0005737">
    <property type="term" value="C:cytoplasm"/>
    <property type="evidence" value="ECO:0007669"/>
    <property type="project" value="UniProtKB-SubCell"/>
</dbReference>
<dbReference type="GO" id="GO:0003852">
    <property type="term" value="F:2-isopropylmalate synthase activity"/>
    <property type="evidence" value="ECO:0007669"/>
    <property type="project" value="UniProtKB-UniRule"/>
</dbReference>
<dbReference type="GO" id="GO:0003985">
    <property type="term" value="F:acetyl-CoA C-acetyltransferase activity"/>
    <property type="evidence" value="ECO:0007669"/>
    <property type="project" value="UniProtKB-UniRule"/>
</dbReference>
<dbReference type="GO" id="GO:0000287">
    <property type="term" value="F:magnesium ion binding"/>
    <property type="evidence" value="ECO:0007669"/>
    <property type="project" value="UniProtKB-UniRule"/>
</dbReference>
<dbReference type="GO" id="GO:0009098">
    <property type="term" value="P:L-leucine biosynthetic process"/>
    <property type="evidence" value="ECO:0007669"/>
    <property type="project" value="UniProtKB-UniRule"/>
</dbReference>
<dbReference type="CDD" id="cd07942">
    <property type="entry name" value="DRE_TIM_LeuA"/>
    <property type="match status" value="1"/>
</dbReference>
<dbReference type="FunFam" id="3.20.20.70:FF:000045">
    <property type="entry name" value="2-isopropylmalate synthase"/>
    <property type="match status" value="1"/>
</dbReference>
<dbReference type="Gene3D" id="3.30.160.270">
    <property type="match status" value="1"/>
</dbReference>
<dbReference type="Gene3D" id="3.20.20.70">
    <property type="entry name" value="Aldolase class I"/>
    <property type="match status" value="1"/>
</dbReference>
<dbReference type="HAMAP" id="MF_00572">
    <property type="entry name" value="LeuA_type2"/>
    <property type="match status" value="1"/>
</dbReference>
<dbReference type="InterPro" id="IPR013709">
    <property type="entry name" value="2-isopropylmalate_synth_dimer"/>
</dbReference>
<dbReference type="InterPro" id="IPR002034">
    <property type="entry name" value="AIPM/Hcit_synth_CS"/>
</dbReference>
<dbReference type="InterPro" id="IPR013785">
    <property type="entry name" value="Aldolase_TIM"/>
</dbReference>
<dbReference type="InterPro" id="IPR005668">
    <property type="entry name" value="IPM_Synthase"/>
</dbReference>
<dbReference type="InterPro" id="IPR054692">
    <property type="entry name" value="LeuA-like_post-cat"/>
</dbReference>
<dbReference type="InterPro" id="IPR036230">
    <property type="entry name" value="LeuA_allosteric_dom_sf"/>
</dbReference>
<dbReference type="InterPro" id="IPR039371">
    <property type="entry name" value="LeuA_N_DRE-TIM"/>
</dbReference>
<dbReference type="InterPro" id="IPR000891">
    <property type="entry name" value="PYR_CT"/>
</dbReference>
<dbReference type="NCBIfam" id="TIGR00970">
    <property type="entry name" value="leuA_yeast"/>
    <property type="match status" value="1"/>
</dbReference>
<dbReference type="NCBIfam" id="NF002991">
    <property type="entry name" value="PRK03739.1"/>
    <property type="match status" value="1"/>
</dbReference>
<dbReference type="PANTHER" id="PTHR46911">
    <property type="match status" value="1"/>
</dbReference>
<dbReference type="PANTHER" id="PTHR46911:SF1">
    <property type="entry name" value="2-ISOPROPYLMALATE SYNTHASE"/>
    <property type="match status" value="1"/>
</dbReference>
<dbReference type="Pfam" id="PF00682">
    <property type="entry name" value="HMGL-like"/>
    <property type="match status" value="1"/>
</dbReference>
<dbReference type="Pfam" id="PF22615">
    <property type="entry name" value="IPMS_D2"/>
    <property type="match status" value="1"/>
</dbReference>
<dbReference type="Pfam" id="PF08502">
    <property type="entry name" value="LeuA_dimer"/>
    <property type="match status" value="1"/>
</dbReference>
<dbReference type="SMART" id="SM00917">
    <property type="entry name" value="LeuA_dimer"/>
    <property type="match status" value="1"/>
</dbReference>
<dbReference type="SUPFAM" id="SSF110921">
    <property type="entry name" value="2-isopropylmalate synthase LeuA, allosteric (dimerisation) domain"/>
    <property type="match status" value="1"/>
</dbReference>
<dbReference type="SUPFAM" id="SSF51569">
    <property type="entry name" value="Aldolase"/>
    <property type="match status" value="1"/>
</dbReference>
<dbReference type="SUPFAM" id="SSF89000">
    <property type="entry name" value="post-HMGL domain-like"/>
    <property type="match status" value="1"/>
</dbReference>
<dbReference type="PROSITE" id="PS00815">
    <property type="entry name" value="AIPM_HOMOCIT_SYNTH_1"/>
    <property type="match status" value="1"/>
</dbReference>
<dbReference type="PROSITE" id="PS00816">
    <property type="entry name" value="AIPM_HOMOCIT_SYNTH_2"/>
    <property type="match status" value="1"/>
</dbReference>
<dbReference type="PROSITE" id="PS50991">
    <property type="entry name" value="PYR_CT"/>
    <property type="match status" value="1"/>
</dbReference>
<accession>Q8XSZ5</accession>
<keyword id="KW-0028">Amino-acid biosynthesis</keyword>
<keyword id="KW-0100">Branched-chain amino acid biosynthesis</keyword>
<keyword id="KW-0963">Cytoplasm</keyword>
<keyword id="KW-0432">Leucine biosynthesis</keyword>
<keyword id="KW-0460">Magnesium</keyword>
<keyword id="KW-0479">Metal-binding</keyword>
<keyword id="KW-0614">Plasmid</keyword>
<keyword id="KW-1185">Reference proteome</keyword>
<keyword id="KW-0808">Transferase</keyword>
<reference key="1">
    <citation type="journal article" date="2002" name="Nature">
        <title>Genome sequence of the plant pathogen Ralstonia solanacearum.</title>
        <authorList>
            <person name="Salanoubat M."/>
            <person name="Genin S."/>
            <person name="Artiguenave F."/>
            <person name="Gouzy J."/>
            <person name="Mangenot S."/>
            <person name="Arlat M."/>
            <person name="Billault A."/>
            <person name="Brottier P."/>
            <person name="Camus J.-C."/>
            <person name="Cattolico L."/>
            <person name="Chandler M."/>
            <person name="Choisne N."/>
            <person name="Claudel-Renard C."/>
            <person name="Cunnac S."/>
            <person name="Demange N."/>
            <person name="Gaspin C."/>
            <person name="Lavie M."/>
            <person name="Moisan A."/>
            <person name="Robert C."/>
            <person name="Saurin W."/>
            <person name="Schiex T."/>
            <person name="Siguier P."/>
            <person name="Thebault P."/>
            <person name="Whalen M."/>
            <person name="Wincker P."/>
            <person name="Levy M."/>
            <person name="Weissenbach J."/>
            <person name="Boucher C.A."/>
        </authorList>
    </citation>
    <scope>NUCLEOTIDE SEQUENCE [LARGE SCALE GENOMIC DNA]</scope>
    <source>
        <strain>ATCC BAA-1114 / GMI1000</strain>
    </source>
</reference>
<comment type="function">
    <text evidence="1">Catalyzes the condensation of the acetyl group of acetyl-CoA with 3-methyl-2-oxobutanoate (2-ketoisovalerate) to form 3-carboxy-3-hydroxy-4-methylpentanoate (2-isopropylmalate).</text>
</comment>
<comment type="catalytic activity">
    <reaction evidence="1">
        <text>3-methyl-2-oxobutanoate + acetyl-CoA + H2O = (2S)-2-isopropylmalate + CoA + H(+)</text>
        <dbReference type="Rhea" id="RHEA:21524"/>
        <dbReference type="ChEBI" id="CHEBI:1178"/>
        <dbReference type="ChEBI" id="CHEBI:11851"/>
        <dbReference type="ChEBI" id="CHEBI:15377"/>
        <dbReference type="ChEBI" id="CHEBI:15378"/>
        <dbReference type="ChEBI" id="CHEBI:57287"/>
        <dbReference type="ChEBI" id="CHEBI:57288"/>
        <dbReference type="EC" id="2.3.3.13"/>
    </reaction>
</comment>
<comment type="cofactor">
    <cofactor evidence="1">
        <name>Mg(2+)</name>
        <dbReference type="ChEBI" id="CHEBI:18420"/>
    </cofactor>
</comment>
<comment type="pathway">
    <text evidence="1">Amino-acid biosynthesis; L-leucine biosynthesis; L-leucine from 3-methyl-2-oxobutanoate: step 1/4.</text>
</comment>
<comment type="subunit">
    <text evidence="1">Homodimer.</text>
</comment>
<comment type="subcellular location">
    <subcellularLocation>
        <location evidence="1">Cytoplasm</location>
    </subcellularLocation>
</comment>
<comment type="similarity">
    <text evidence="1 2">Belongs to the alpha-IPM synthase/homocitrate synthase family. LeuA type 2 subfamily.</text>
</comment>
<evidence type="ECO:0000255" key="1">
    <source>
        <dbReference type="HAMAP-Rule" id="MF_00572"/>
    </source>
</evidence>
<evidence type="ECO:0000305" key="2"/>
<proteinExistence type="inferred from homology"/>
<protein>
    <recommendedName>
        <fullName evidence="1">2-isopropylmalate synthase</fullName>
        <ecNumber evidence="1">2.3.3.13</ecNumber>
    </recommendedName>
    <alternativeName>
        <fullName evidence="1">Alpha-IPM synthase</fullName>
    </alternativeName>
    <alternativeName>
        <fullName evidence="1">Alpha-isopropylmalate synthase</fullName>
    </alternativeName>
</protein>
<organism>
    <name type="scientific">Ralstonia nicotianae (strain ATCC BAA-1114 / GMI1000)</name>
    <name type="common">Ralstonia solanacearum</name>
    <dbReference type="NCBI Taxonomy" id="267608"/>
    <lineage>
        <taxon>Bacteria</taxon>
        <taxon>Pseudomonadati</taxon>
        <taxon>Pseudomonadota</taxon>
        <taxon>Betaproteobacteria</taxon>
        <taxon>Burkholderiales</taxon>
        <taxon>Burkholderiaceae</taxon>
        <taxon>Ralstonia</taxon>
        <taxon>Ralstonia solanacearum species complex</taxon>
    </lineage>
</organism>
<gene>
    <name evidence="1" type="primary">leuA</name>
    <name type="synonym">leuA2</name>
    <name type="ordered locus">RSp0322</name>
    <name type="ORF">RS05445</name>
</gene>
<name>LEU12_RALN1</name>
<geneLocation type="plasmid">
    <name>megaplasmid Rsp</name>
</geneLocation>